<name>RL30_CHLCH</name>
<feature type="chain" id="PRO_1000056024" description="Large ribosomal subunit protein uL30">
    <location>
        <begin position="1"/>
        <end position="63"/>
    </location>
</feature>
<gene>
    <name evidence="1" type="primary">rpmD</name>
    <name type="ordered locus">Cag_1833</name>
</gene>
<protein>
    <recommendedName>
        <fullName evidence="1">Large ribosomal subunit protein uL30</fullName>
    </recommendedName>
    <alternativeName>
        <fullName evidence="2">50S ribosomal protein L30</fullName>
    </alternativeName>
</protein>
<evidence type="ECO:0000255" key="1">
    <source>
        <dbReference type="HAMAP-Rule" id="MF_01371"/>
    </source>
</evidence>
<evidence type="ECO:0000305" key="2"/>
<reference key="1">
    <citation type="submission" date="2005-08" db="EMBL/GenBank/DDBJ databases">
        <title>Complete sequence of Chlorobium chlorochromatii CaD3.</title>
        <authorList>
            <consortium name="US DOE Joint Genome Institute"/>
            <person name="Copeland A."/>
            <person name="Lucas S."/>
            <person name="Lapidus A."/>
            <person name="Barry K."/>
            <person name="Detter J.C."/>
            <person name="Glavina T."/>
            <person name="Hammon N."/>
            <person name="Israni S."/>
            <person name="Pitluck S."/>
            <person name="Bryant D."/>
            <person name="Schmutz J."/>
            <person name="Larimer F."/>
            <person name="Land M."/>
            <person name="Kyrpides N."/>
            <person name="Ivanova N."/>
            <person name="Richardson P."/>
        </authorList>
    </citation>
    <scope>NUCLEOTIDE SEQUENCE [LARGE SCALE GENOMIC DNA]</scope>
    <source>
        <strain>CaD3</strain>
    </source>
</reference>
<sequence length="63" mass="6952">MSDNDKTVTITQVRSVIGCTQKQKATIQALGLGRPNYSVVKPDNACTRGQIRVVQHLVKIEEN</sequence>
<proteinExistence type="inferred from homology"/>
<organism>
    <name type="scientific">Chlorobium chlorochromatii (strain CaD3)</name>
    <dbReference type="NCBI Taxonomy" id="340177"/>
    <lineage>
        <taxon>Bacteria</taxon>
        <taxon>Pseudomonadati</taxon>
        <taxon>Chlorobiota</taxon>
        <taxon>Chlorobiia</taxon>
        <taxon>Chlorobiales</taxon>
        <taxon>Chlorobiaceae</taxon>
        <taxon>Chlorobium/Pelodictyon group</taxon>
        <taxon>Chlorobium</taxon>
    </lineage>
</organism>
<keyword id="KW-0687">Ribonucleoprotein</keyword>
<keyword id="KW-0689">Ribosomal protein</keyword>
<dbReference type="EMBL" id="CP000108">
    <property type="protein sequence ID" value="ABB29084.1"/>
    <property type="molecule type" value="Genomic_DNA"/>
</dbReference>
<dbReference type="SMR" id="Q3APJ1"/>
<dbReference type="STRING" id="340177.Cag_1833"/>
<dbReference type="KEGG" id="cch:Cag_1833"/>
<dbReference type="eggNOG" id="COG1841">
    <property type="taxonomic scope" value="Bacteria"/>
</dbReference>
<dbReference type="HOGENOM" id="CLU_131047_2_0_10"/>
<dbReference type="OrthoDB" id="9812790at2"/>
<dbReference type="GO" id="GO:0022625">
    <property type="term" value="C:cytosolic large ribosomal subunit"/>
    <property type="evidence" value="ECO:0007669"/>
    <property type="project" value="TreeGrafter"/>
</dbReference>
<dbReference type="GO" id="GO:0003735">
    <property type="term" value="F:structural constituent of ribosome"/>
    <property type="evidence" value="ECO:0007669"/>
    <property type="project" value="InterPro"/>
</dbReference>
<dbReference type="GO" id="GO:0006412">
    <property type="term" value="P:translation"/>
    <property type="evidence" value="ECO:0007669"/>
    <property type="project" value="UniProtKB-UniRule"/>
</dbReference>
<dbReference type="CDD" id="cd01658">
    <property type="entry name" value="Ribosomal_L30"/>
    <property type="match status" value="1"/>
</dbReference>
<dbReference type="Gene3D" id="3.30.1390.20">
    <property type="entry name" value="Ribosomal protein L30, ferredoxin-like fold domain"/>
    <property type="match status" value="1"/>
</dbReference>
<dbReference type="HAMAP" id="MF_01371_B">
    <property type="entry name" value="Ribosomal_uL30_B"/>
    <property type="match status" value="1"/>
</dbReference>
<dbReference type="InterPro" id="IPR036919">
    <property type="entry name" value="Ribo_uL30_ferredoxin-like_sf"/>
</dbReference>
<dbReference type="InterPro" id="IPR005996">
    <property type="entry name" value="Ribosomal_uL30_bac-type"/>
</dbReference>
<dbReference type="InterPro" id="IPR016082">
    <property type="entry name" value="Ribosomal_uL30_ferredoxin-like"/>
</dbReference>
<dbReference type="NCBIfam" id="TIGR01308">
    <property type="entry name" value="rpmD_bact"/>
    <property type="match status" value="1"/>
</dbReference>
<dbReference type="PANTHER" id="PTHR15892:SF2">
    <property type="entry name" value="LARGE RIBOSOMAL SUBUNIT PROTEIN UL30M"/>
    <property type="match status" value="1"/>
</dbReference>
<dbReference type="PANTHER" id="PTHR15892">
    <property type="entry name" value="MITOCHONDRIAL RIBOSOMAL PROTEIN L30"/>
    <property type="match status" value="1"/>
</dbReference>
<dbReference type="Pfam" id="PF00327">
    <property type="entry name" value="Ribosomal_L30"/>
    <property type="match status" value="1"/>
</dbReference>
<dbReference type="PIRSF" id="PIRSF002211">
    <property type="entry name" value="Ribosomal_L30_bac-type"/>
    <property type="match status" value="1"/>
</dbReference>
<dbReference type="SUPFAM" id="SSF55129">
    <property type="entry name" value="Ribosomal protein L30p/L7e"/>
    <property type="match status" value="1"/>
</dbReference>
<comment type="subunit">
    <text evidence="1">Part of the 50S ribosomal subunit.</text>
</comment>
<comment type="similarity">
    <text evidence="1">Belongs to the universal ribosomal protein uL30 family.</text>
</comment>
<accession>Q3APJ1</accession>